<protein>
    <recommendedName>
        <fullName>Chaperone ric-8</fullName>
    </recommendedName>
    <alternativeName>
        <fullName>Resistance to inhibitors of cholinesterase protein 8</fullName>
    </alternativeName>
    <alternativeName>
        <fullName>Synembryn</fullName>
    </alternativeName>
</protein>
<organism>
    <name type="scientific">Caenorhabditis elegans</name>
    <dbReference type="NCBI Taxonomy" id="6239"/>
    <lineage>
        <taxon>Eukaryota</taxon>
        <taxon>Metazoa</taxon>
        <taxon>Ecdysozoa</taxon>
        <taxon>Nematoda</taxon>
        <taxon>Chromadorea</taxon>
        <taxon>Rhabditida</taxon>
        <taxon>Rhabditina</taxon>
        <taxon>Rhabditomorpha</taxon>
        <taxon>Rhabditoidea</taxon>
        <taxon>Rhabditidae</taxon>
        <taxon>Peloderinae</taxon>
        <taxon>Caenorhabditis</taxon>
    </lineage>
</organism>
<keyword id="KW-0025">Alternative splicing</keyword>
<keyword id="KW-0143">Chaperone</keyword>
<keyword id="KW-0963">Cytoplasm</keyword>
<keyword id="KW-0217">Developmental protein</keyword>
<keyword id="KW-0344">Guanine-nucleotide releasing factor</keyword>
<keyword id="KW-1185">Reference proteome</keyword>
<proteinExistence type="evidence at protein level"/>
<name>RIC8_CAEEL</name>
<sequence length="566" mass="63447">MSEELHSDLIASIFGGKPAKIEEFFSKWNFANAAVSKFDMANSAKNELGDRICEVIENGELTHVLLETIKILSREKDGLEGLLNDPLCDKILAFAELSSNENNSKTVHTLMEAQKCLINTLFHSQRMRDRFYANPKTGENLQFFLGEFEENRRKTSSIDWIRLLNPVQAAEIWYFYHRIAFIATALGREFQKNWANDPKTIDSLLLAVEICTNRSENSTQDINRATEALKTFFNVFCHFHGDVKAIDHKNAAKTCQILRDAICSDVLTDDVVQSAIHCLSVPPLPMVLSVLCGKNSKNNGGENEEEKFFVEELSNMQLTEAILMHLDKQLTKVVALLLNDAPNQQQNPMLSAEASTLTDLVGPYFQVLARLCTDSKYVRRYCRIRVIPPLVSEEVQKRPEENNTLRGRIARIMMLPSSTKDVAAEFLFIICKRSVNRMIKYLGFGHSAGHLANLGLLGQINQPKHASDSEDSETEDYNQIKDSVNPVTGAIYPSDHGSALAGMSEEQKEYEAMKLVDAMNQMMETGIVKPGTIGDDGKIREVSHVLELLKNAPEPAPAENSDSDEE</sequence>
<accession>Q9GSX9</accession>
<accession>Q86DD4</accession>
<reference key="1">
    <citation type="journal article" date="2000" name="Neuron">
        <title>RIC-8 (Synembryn): a novel conserved protein that is required for Gq alpha signaling in the C. elegans nervous system.</title>
        <authorList>
            <person name="Miller K.G."/>
            <person name="Emerson M.D."/>
            <person name="McManus J.R."/>
            <person name="Rand J.B."/>
        </authorList>
    </citation>
    <scope>NUCLEOTIDE SEQUENCE [MRNA] (ISOFORM A)</scope>
    <scope>FUNCTION</scope>
    <scope>SUBCELLULAR LOCATION</scope>
    <scope>TISSUE SPECIFICITY</scope>
    <scope>MUTAGENESIS OF LEU-267 AND ALA-275</scope>
</reference>
<reference key="2">
    <citation type="journal article" date="1998" name="Science">
        <title>Genome sequence of the nematode C. elegans: a platform for investigating biology.</title>
        <authorList>
            <consortium name="The C. elegans sequencing consortium"/>
        </authorList>
    </citation>
    <scope>NUCLEOTIDE SEQUENCE [LARGE SCALE GENOMIC DNA]</scope>
    <scope>ALTERNATIVE SPLICING</scope>
    <source>
        <strain>Bristol N2</strain>
    </source>
</reference>
<reference key="3">
    <citation type="journal article" date="2000" name="Genetics">
        <title>A role for RIC-8 (Synembryn) and GOA-1 (G(o)alpha) in regulating a subset of centrosome movements during early embryogenesis in Caenorhabditis elegans.</title>
        <authorList>
            <person name="Miller K.G."/>
            <person name="Rand J.B."/>
        </authorList>
    </citation>
    <scope>FUNCTION</scope>
</reference>
<reference key="4">
    <citation type="journal article" date="2004" name="Cell">
        <title>RGS-7 completes a receptor-independent heterotrimeric G protein cycle to asymmetrically regulate mitotic spindle positioning in C. elegans.</title>
        <authorList>
            <person name="Hess H.A."/>
            <person name="Roeper J.-C."/>
            <person name="Grill S.W."/>
            <person name="Koelle M.R."/>
        </authorList>
    </citation>
    <scope>FUNCTION</scope>
    <scope>SUBCELLULAR LOCATION</scope>
    <scope>INTERACTION WITH GOA-1</scope>
</reference>
<reference key="5">
    <citation type="journal article" date="2004" name="Cell">
        <title>RIC-8 is required for GPR-1/2-dependent Galpha function during asymmetric division of C. elegans embryos.</title>
        <authorList>
            <person name="Afshar K."/>
            <person name="Willard F.S."/>
            <person name="Colombo K."/>
            <person name="Johnston C.A."/>
            <person name="McCudden C.R."/>
            <person name="Siderovski D.P."/>
            <person name="Goenczy P."/>
        </authorList>
    </citation>
    <scope>FUNCTION</scope>
    <scope>SUBCELLULAR LOCATION</scope>
    <scope>INTERACTION WITH GOA-1</scope>
</reference>
<reference key="6">
    <citation type="journal article" date="2004" name="Curr. Biol.">
        <title>Control of embryonic spindle positioning and Galpha activity by C. elegans RIC-8.</title>
        <authorList>
            <person name="Couwenbergs C."/>
            <person name="Spilker A.C."/>
            <person name="Gotta M."/>
        </authorList>
    </citation>
    <scope>FUNCTION</scope>
    <scope>INTERACTION WITH GOA-1</scope>
</reference>
<reference key="7">
    <citation type="journal article" date="2005" name="Development">
        <title>Cortical localization of the Galpha protein GPA-16 requires RIC-8 function during C. elegans asymmetric cell division.</title>
        <authorList>
            <person name="Afshar K."/>
            <person name="Willard F.S."/>
            <person name="Colombo K."/>
            <person name="Siderovski D.P."/>
            <person name="Goenczy P."/>
        </authorList>
    </citation>
    <scope>FUNCTION</scope>
    <scope>INTERACTION WITH GPA-16</scope>
</reference>
<reference key="8">
    <citation type="journal article" date="2005" name="Genetics">
        <title>Mutations that rescue the paralysis of Caenorhabditis elegans ric-8 (synembryn) mutants activate the G alpha(s) pathway and define a third major branch of the synaptic signaling network.</title>
        <authorList>
            <person name="Schade M.A."/>
            <person name="Reynolds N.K."/>
            <person name="Dollins C.M."/>
            <person name="Miller K.G."/>
        </authorList>
    </citation>
    <scope>FUNCTION</scope>
</reference>
<reference key="9">
    <citation type="journal article" date="2005" name="Genetics">
        <title>Convergent, RIC-8-dependent Galpha signaling pathways in the Caenorhabditis elegans synaptic signaling network.</title>
        <authorList>
            <person name="Reynolds N.K."/>
            <person name="Schade M.A."/>
            <person name="Miller K.G."/>
        </authorList>
    </citation>
    <scope>FUNCTION</scope>
</reference>
<reference key="10">
    <citation type="journal article" date="2018" name="Sci. Signal.">
        <title>Dual phosphorylation of Ric-8A enhances its ability to mediate G protein alpha subunit folding and to stimulate guanine nucleotide exchange.</title>
        <authorList>
            <person name="Papasergi-Scott M.M."/>
            <person name="Stoveken H.M."/>
            <person name="MacConnachie L."/>
            <person name="Chan P.-Y."/>
            <person name="Gabay M."/>
            <person name="Wong D."/>
            <person name="Freeman R.S."/>
            <person name="Beg A.A."/>
            <person name="Tall G.G."/>
        </authorList>
    </citation>
    <scope>FUNCTION</scope>
    <scope>MUTAGENESIS OF SER-467 AND SER-472</scope>
</reference>
<evidence type="ECO:0000269" key="1">
    <source>
    </source>
</evidence>
<evidence type="ECO:0000269" key="2">
    <source>
    </source>
</evidence>
<evidence type="ECO:0000269" key="3">
    <source>
    </source>
</evidence>
<evidence type="ECO:0000269" key="4">
    <source>
    </source>
</evidence>
<evidence type="ECO:0000269" key="5">
    <source>
    </source>
</evidence>
<evidence type="ECO:0000269" key="6">
    <source>
    </source>
</evidence>
<evidence type="ECO:0000269" key="7">
    <source>
    </source>
</evidence>
<evidence type="ECO:0000269" key="8">
    <source>
    </source>
</evidence>
<evidence type="ECO:0000269" key="9">
    <source>
    </source>
</evidence>
<evidence type="ECO:0000269" key="10">
    <source>
    </source>
</evidence>
<evidence type="ECO:0000305" key="11"/>
<dbReference type="EMBL" id="AF288812">
    <property type="protein sequence ID" value="AAG10199.1"/>
    <property type="molecule type" value="mRNA"/>
</dbReference>
<dbReference type="EMBL" id="FO081818">
    <property type="protein sequence ID" value="CCD74109.1"/>
    <property type="molecule type" value="Genomic_DNA"/>
</dbReference>
<dbReference type="EMBL" id="FO081818">
    <property type="protein sequence ID" value="CCD74110.1"/>
    <property type="molecule type" value="Genomic_DNA"/>
</dbReference>
<dbReference type="RefSeq" id="NP_001023561.1">
    <molecule id="Q9GSX9-1"/>
    <property type="nucleotide sequence ID" value="NM_001028390.5"/>
</dbReference>
<dbReference type="RefSeq" id="NP_001023562.1">
    <property type="nucleotide sequence ID" value="NM_001028391.3"/>
</dbReference>
<dbReference type="RefSeq" id="NP_001421841.1">
    <molecule id="Q9GSX9-2"/>
    <property type="nucleotide sequence ID" value="NM_001434912.1"/>
</dbReference>
<dbReference type="SMR" id="Q9GSX9"/>
<dbReference type="BioGRID" id="42196">
    <property type="interactions" value="10"/>
</dbReference>
<dbReference type="DIP" id="DIP-26607N"/>
<dbReference type="FunCoup" id="Q9GSX9">
    <property type="interactions" value="2626"/>
</dbReference>
<dbReference type="IntAct" id="Q9GSX9">
    <property type="interactions" value="6"/>
</dbReference>
<dbReference type="STRING" id="6239.Y69A2AR.2a.1"/>
<dbReference type="iPTMnet" id="Q9GSX9"/>
<dbReference type="PaxDb" id="6239-Y69A2AR.2a"/>
<dbReference type="PeptideAtlas" id="Q9GSX9"/>
<dbReference type="EnsemblMetazoa" id="Y69A2AR.2a.1">
    <molecule id="Q9GSX9-1"/>
    <property type="protein sequence ID" value="Y69A2AR.2a.1"/>
    <property type="gene ID" value="WBGene00004367"/>
</dbReference>
<dbReference type="EnsemblMetazoa" id="Y69A2AR.2b.1">
    <molecule id="Q9GSX9-2"/>
    <property type="protein sequence ID" value="Y69A2AR.2b.1"/>
    <property type="gene ID" value="WBGene00004367"/>
</dbReference>
<dbReference type="GeneID" id="177048"/>
<dbReference type="KEGG" id="cel:CELE_Y69A2AR.2"/>
<dbReference type="UCSC" id="Y69A2AR.2a">
    <molecule id="Q9GSX9-1"/>
    <property type="organism name" value="c. elegans"/>
</dbReference>
<dbReference type="AGR" id="WB:WBGene00004367"/>
<dbReference type="CTD" id="177048"/>
<dbReference type="WormBase" id="Y69A2AR.2a">
    <molecule id="Q9GSX9-1"/>
    <property type="protein sequence ID" value="CE27516"/>
    <property type="gene ID" value="WBGene00004367"/>
    <property type="gene designation" value="ric-8"/>
</dbReference>
<dbReference type="WormBase" id="Y69A2AR.2b">
    <molecule id="Q9GSX9-2"/>
    <property type="protein sequence ID" value="CE33952"/>
    <property type="gene ID" value="WBGene00004367"/>
    <property type="gene designation" value="ric-8"/>
</dbReference>
<dbReference type="eggNOG" id="KOG4464">
    <property type="taxonomic scope" value="Eukaryota"/>
</dbReference>
<dbReference type="HOGENOM" id="CLU_018602_1_0_1"/>
<dbReference type="InParanoid" id="Q9GSX9"/>
<dbReference type="OMA" id="ETLCDPP"/>
<dbReference type="OrthoDB" id="5585685at2759"/>
<dbReference type="PhylomeDB" id="Q9GSX9"/>
<dbReference type="PRO" id="PR:Q9GSX9"/>
<dbReference type="Proteomes" id="UP000001940">
    <property type="component" value="Chromosome IV"/>
</dbReference>
<dbReference type="Bgee" id="WBGene00004367">
    <property type="expression patterns" value="Expressed in pharyngeal muscle cell (C elegans) and 4 other cell types or tissues"/>
</dbReference>
<dbReference type="ExpressionAtlas" id="Q9GSX9">
    <property type="expression patterns" value="baseline and differential"/>
</dbReference>
<dbReference type="GO" id="GO:0005818">
    <property type="term" value="C:aster"/>
    <property type="evidence" value="ECO:0000314"/>
    <property type="project" value="WormBase"/>
</dbReference>
<dbReference type="GO" id="GO:0005938">
    <property type="term" value="C:cell cortex"/>
    <property type="evidence" value="ECO:0000314"/>
    <property type="project" value="WormBase"/>
</dbReference>
<dbReference type="GO" id="GO:0005737">
    <property type="term" value="C:cytoplasm"/>
    <property type="evidence" value="ECO:0000318"/>
    <property type="project" value="GO_Central"/>
</dbReference>
<dbReference type="GO" id="GO:0005828">
    <property type="term" value="C:kinetochore microtubule"/>
    <property type="evidence" value="ECO:0000314"/>
    <property type="project" value="WormBase"/>
</dbReference>
<dbReference type="GO" id="GO:0005819">
    <property type="term" value="C:spindle"/>
    <property type="evidence" value="ECO:0000314"/>
    <property type="project" value="WormBase"/>
</dbReference>
<dbReference type="GO" id="GO:0001965">
    <property type="term" value="F:G-protein alpha-subunit binding"/>
    <property type="evidence" value="ECO:0000318"/>
    <property type="project" value="GO_Central"/>
</dbReference>
<dbReference type="GO" id="GO:0005085">
    <property type="term" value="F:guanyl-nucleotide exchange factor activity"/>
    <property type="evidence" value="ECO:0000314"/>
    <property type="project" value="WormBase"/>
</dbReference>
<dbReference type="GO" id="GO:0007186">
    <property type="term" value="P:G protein-coupled receptor signaling pathway"/>
    <property type="evidence" value="ECO:0000318"/>
    <property type="project" value="GO_Central"/>
</dbReference>
<dbReference type="GO" id="GO:0072697">
    <property type="term" value="P:protein localization to cell cortex"/>
    <property type="evidence" value="ECO:0000315"/>
    <property type="project" value="WormBase"/>
</dbReference>
<dbReference type="GO" id="GO:2000114">
    <property type="term" value="P:regulation of establishment of cell polarity"/>
    <property type="evidence" value="ECO:0000316"/>
    <property type="project" value="WormBase"/>
</dbReference>
<dbReference type="GO" id="GO:0060259">
    <property type="term" value="P:regulation of feeding behavior"/>
    <property type="evidence" value="ECO:0000315"/>
    <property type="project" value="WormBase"/>
</dbReference>
<dbReference type="InterPro" id="IPR008376">
    <property type="entry name" value="Chaperone_Ric-8_A/B"/>
</dbReference>
<dbReference type="InterPro" id="IPR019318">
    <property type="entry name" value="Gua_nucleotide_exch_fac_Ric8"/>
</dbReference>
<dbReference type="PANTHER" id="PTHR12425">
    <property type="entry name" value="SYNEMBRYN"/>
    <property type="match status" value="1"/>
</dbReference>
<dbReference type="PANTHER" id="PTHR12425:SF5">
    <property type="entry name" value="SYNEMBRYN"/>
    <property type="match status" value="1"/>
</dbReference>
<dbReference type="Pfam" id="PF10165">
    <property type="entry name" value="Ric8"/>
    <property type="match status" value="1"/>
</dbReference>
<dbReference type="PRINTS" id="PR01802">
    <property type="entry name" value="SYNEMBRYN"/>
</dbReference>
<feature type="chain" id="PRO_0000235904" description="Chaperone ric-8">
    <location>
        <begin position="1"/>
        <end position="566"/>
    </location>
</feature>
<feature type="splice variant" id="VSP_018516" description="In isoform b." evidence="11">
    <original>TLMEAQKCLINTLFHSQRMRDRFYANPKTGENLQFFLGEFEENRRKTSS</original>
    <variation>SKAILSLKILEFPAKNHNFSTNGGAKMSNQHFVSLTTNERSILCKPENW</variation>
    <location>
        <begin position="109"/>
        <end position="157"/>
    </location>
</feature>
<feature type="splice variant" id="VSP_018517" description="In isoform b." evidence="11">
    <location>
        <begin position="158"/>
        <end position="566"/>
    </location>
</feature>
<feature type="mutagenesis site" description="In md1712; exhibits partial embryonic lethality that appears to result from defects in the regulation of a subset of centrosome movements during early embryogenesis." evidence="1">
    <original>L</original>
    <variation>F</variation>
    <location>
        <position position="267"/>
    </location>
</feature>
<feature type="mutagenesis site" description="In md303; exhibits partial embryonic lethality that appears to result from defects in the regulation of a subset of centrosome movements during early embryogenesis; impairs interaction with goa-1." evidence="1">
    <original>A</original>
    <variation>E</variation>
    <location>
        <position position="275"/>
    </location>
</feature>
<feature type="mutagenesis site" description="Knockin worms show locomotion and egg-laying defects." evidence="9">
    <original>S</original>
    <variation>A</variation>
    <location>
        <position position="467"/>
    </location>
</feature>
<feature type="mutagenesis site" description="Knockin worms show locomotion and egg-laying defects." evidence="9">
    <original>S</original>
    <variation>A</variation>
    <location>
        <position position="472"/>
    </location>
</feature>
<gene>
    <name type="primary">ric-8</name>
    <name type="ORF">Y69A2AR.2</name>
</gene>
<comment type="function">
    <text evidence="1 2 3 4 5 6 7 8 9">Chaperone that specifically binds and folds some, but not all, nascent G alpha proteins prior to G protein heterotrimer formation, promoting their stability and activity (PubMed:29844055). Also acts as a guanine nucleotide exchange factor (GEF) for G alpha proteins by stimulating exchange of bound GDP for free GTP (PubMed:10985349, PubMed:11102364, PubMed:15479638, PubMed:29844055). Able to facilitate synaptic transmission in the nervous system probably by activating G(q)-alpha (egl-30) (PubMed:15489510, PubMed:15489511). Also able to activate the G(s)-alpha in synaptic signaling network (PubMed:15489511). Plays a key role in asymmetric spindle positioning, a step for asymmetric cell division that generates cell diversity during development by activating G(i)-alpha protein goa-1 and gpa-16 independently of G-protein coupled receptors (PubMed:15479638, PubMed:15479639, PubMed:15498497). While it acts as a GEF for goa-1, it has no GEF activity toward gpa-16 (PubMed:16162648). In addition to its GEF activity, it is required for cortical subcellular localization of G-alpha proteins such as gpa-16 (PubMed:16162648). Also required for the interaction of goa-1 and gpr-1/2, suggesting that it may act by generating G-alpha proteins free from G-beta-gamma subunits, enabling gpr-1/2 to mediate asymmetric cell division (PubMed:15479639).</text>
</comment>
<comment type="subunit">
    <text evidence="3 4 7 8">Interacts with GDP-bound G-alpha proteins goa-1 and gpa-16. Does not interact with G-alpha proteins when they are in complex with subunits beta and gamma.</text>
</comment>
<comment type="interaction">
    <interactant intactId="EBI-1004494">
        <id>Q9GSX9-1</id>
    </interactant>
    <interactant intactId="EBI-316062">
        <id>P51875</id>
        <label>goa-1</label>
    </interactant>
    <organismsDiffer>false</organismsDiffer>
    <experiments>9</experiments>
</comment>
<comment type="interaction">
    <interactant intactId="EBI-1004494">
        <id>Q9GSX9-1</id>
    </interactant>
    <interactant intactId="EBI-1005005">
        <id>Q9N2V6</id>
        <label>gpa-16</label>
    </interactant>
    <organismsDiffer>false</organismsDiffer>
    <experiments>2</experiments>
</comment>
<comment type="subcellular location">
    <subcellularLocation>
        <location evidence="3 4 10">Cytoplasm</location>
        <location evidence="3 4 10">Cell cortex</location>
    </subcellularLocation>
    <text>Localizes to the cell cortex. Excluded from interphase nuclei and becomes localized around what appeared to be kinetochore microtubules at the onset of mitosis, becoming more diffuse during anaphase.</text>
</comment>
<comment type="alternative products">
    <event type="alternative splicing"/>
    <isoform>
        <id>Q9GSX9-1</id>
        <name>a</name>
        <sequence type="displayed"/>
    </isoform>
    <isoform>
        <id>Q9GSX9-2</id>
        <name>b</name>
        <sequence type="described" ref="VSP_018516 VSP_018517"/>
    </isoform>
</comment>
<comment type="tissue specificity">
    <text evidence="10">Present throughout the nervous system in juveniles and adults (at protein level).</text>
</comment>
<comment type="similarity">
    <text evidence="11">Belongs to the synembryn family.</text>
</comment>